<name>PA2SB_AUSSU</name>
<reference key="1">
    <citation type="journal article" date="2000" name="Arch. Biochem. Biophys.">
        <title>Phospholipase A(2) with platelet aggregation inhibitor activity from Austrelaps superbus venom: protein purification and cDNA cloning.</title>
        <authorList>
            <person name="Singh S.B."/>
            <person name="Armugam A."/>
            <person name="Kini R.M."/>
            <person name="Jeyaseelan K."/>
        </authorList>
    </citation>
    <scope>PROTEIN SEQUENCE</scope>
    <scope>MASS SPECTROMETRY</scope>
    <source>
        <tissue>Venom</tissue>
    </source>
</reference>
<keyword id="KW-0106">Calcium</keyword>
<keyword id="KW-0903">Direct protein sequencing</keyword>
<keyword id="KW-1015">Disulfide bond</keyword>
<keyword id="KW-1199">Hemostasis impairing toxin</keyword>
<keyword id="KW-0378">Hydrolase</keyword>
<keyword id="KW-0442">Lipid degradation</keyword>
<keyword id="KW-0443">Lipid metabolism</keyword>
<keyword id="KW-0479">Metal-binding</keyword>
<keyword id="KW-1201">Platelet aggregation inhibiting toxin</keyword>
<keyword id="KW-0964">Secreted</keyword>
<keyword id="KW-0800">Toxin</keyword>
<dbReference type="EC" id="3.1.1.4"/>
<dbReference type="SMR" id="P59068"/>
<dbReference type="GO" id="GO:0005576">
    <property type="term" value="C:extracellular region"/>
    <property type="evidence" value="ECO:0007669"/>
    <property type="project" value="UniProtKB-SubCell"/>
</dbReference>
<dbReference type="GO" id="GO:0005509">
    <property type="term" value="F:calcium ion binding"/>
    <property type="evidence" value="ECO:0007669"/>
    <property type="project" value="InterPro"/>
</dbReference>
<dbReference type="GO" id="GO:0047498">
    <property type="term" value="F:calcium-dependent phospholipase A2 activity"/>
    <property type="evidence" value="ECO:0007669"/>
    <property type="project" value="TreeGrafter"/>
</dbReference>
<dbReference type="GO" id="GO:0005543">
    <property type="term" value="F:phospholipid binding"/>
    <property type="evidence" value="ECO:0007669"/>
    <property type="project" value="TreeGrafter"/>
</dbReference>
<dbReference type="GO" id="GO:0090729">
    <property type="term" value="F:toxin activity"/>
    <property type="evidence" value="ECO:0007669"/>
    <property type="project" value="UniProtKB-KW"/>
</dbReference>
<dbReference type="GO" id="GO:0050482">
    <property type="term" value="P:arachidonate secretion"/>
    <property type="evidence" value="ECO:0007669"/>
    <property type="project" value="InterPro"/>
</dbReference>
<dbReference type="GO" id="GO:0016042">
    <property type="term" value="P:lipid catabolic process"/>
    <property type="evidence" value="ECO:0007669"/>
    <property type="project" value="UniProtKB-KW"/>
</dbReference>
<dbReference type="GO" id="GO:0006644">
    <property type="term" value="P:phospholipid metabolic process"/>
    <property type="evidence" value="ECO:0007669"/>
    <property type="project" value="InterPro"/>
</dbReference>
<dbReference type="CDD" id="cd00125">
    <property type="entry name" value="PLA2c"/>
    <property type="match status" value="1"/>
</dbReference>
<dbReference type="Gene3D" id="1.20.90.10">
    <property type="entry name" value="Phospholipase A2 domain"/>
    <property type="match status" value="1"/>
</dbReference>
<dbReference type="InterPro" id="IPR001211">
    <property type="entry name" value="PLipase_A2"/>
</dbReference>
<dbReference type="InterPro" id="IPR016090">
    <property type="entry name" value="PLipase_A2_dom"/>
</dbReference>
<dbReference type="InterPro" id="IPR036444">
    <property type="entry name" value="PLipase_A2_dom_sf"/>
</dbReference>
<dbReference type="InterPro" id="IPR033113">
    <property type="entry name" value="PLipase_A2_His_AS"/>
</dbReference>
<dbReference type="PANTHER" id="PTHR11716:SF94">
    <property type="entry name" value="PHOSPHOLIPASE A2"/>
    <property type="match status" value="1"/>
</dbReference>
<dbReference type="PANTHER" id="PTHR11716">
    <property type="entry name" value="PHOSPHOLIPASE A2 FAMILY MEMBER"/>
    <property type="match status" value="1"/>
</dbReference>
<dbReference type="Pfam" id="PF00068">
    <property type="entry name" value="Phospholip_A2_1"/>
    <property type="match status" value="1"/>
</dbReference>
<dbReference type="PRINTS" id="PR00389">
    <property type="entry name" value="PHPHLIPASEA2"/>
</dbReference>
<dbReference type="SMART" id="SM00085">
    <property type="entry name" value="PA2c"/>
    <property type="match status" value="1"/>
</dbReference>
<dbReference type="SUPFAM" id="SSF48619">
    <property type="entry name" value="Phospholipase A2, PLA2"/>
    <property type="match status" value="1"/>
</dbReference>
<dbReference type="PROSITE" id="PS00118">
    <property type="entry name" value="PA2_HIS"/>
    <property type="match status" value="1"/>
</dbReference>
<comment type="function">
    <text>Snake venom phospholipase A2 (PLA2) that inhibits collagen-induced platelet aggregation. In terms of inhibition of platelet aggregation, superbin b is more potent as superbin c, and d. PLA2 catalyzes the calcium-dependent hydrolysis of the 2-acyl groups in 3-sn-phosphoglycerides.</text>
</comment>
<comment type="catalytic activity">
    <reaction evidence="2">
        <text>a 1,2-diacyl-sn-glycero-3-phosphocholine + H2O = a 1-acyl-sn-glycero-3-phosphocholine + a fatty acid + H(+)</text>
        <dbReference type="Rhea" id="RHEA:15801"/>
        <dbReference type="ChEBI" id="CHEBI:15377"/>
        <dbReference type="ChEBI" id="CHEBI:15378"/>
        <dbReference type="ChEBI" id="CHEBI:28868"/>
        <dbReference type="ChEBI" id="CHEBI:57643"/>
        <dbReference type="ChEBI" id="CHEBI:58168"/>
        <dbReference type="EC" id="3.1.1.4"/>
    </reaction>
</comment>
<comment type="cofactor">
    <cofactor evidence="1">
        <name>Ca(2+)</name>
        <dbReference type="ChEBI" id="CHEBI:29108"/>
    </cofactor>
    <text evidence="1">Binds 1 Ca(2+) ion.</text>
</comment>
<comment type="subcellular location">
    <subcellularLocation>
        <location>Secreted</location>
    </subcellularLocation>
</comment>
<comment type="tissue specificity">
    <text>Expressed by the venom gland.</text>
</comment>
<comment type="mass spectrometry"/>
<comment type="similarity">
    <text evidence="4">Belongs to the phospholipase A2 family. Group I subfamily. D49 sub-subfamily.</text>
</comment>
<organism>
    <name type="scientific">Austrelaps superbus</name>
    <name type="common">Lowland copperhead snake</name>
    <name type="synonym">Hoplocephalus superbus</name>
    <dbReference type="NCBI Taxonomy" id="29156"/>
    <lineage>
        <taxon>Eukaryota</taxon>
        <taxon>Metazoa</taxon>
        <taxon>Chordata</taxon>
        <taxon>Craniata</taxon>
        <taxon>Vertebrata</taxon>
        <taxon>Euteleostomi</taxon>
        <taxon>Lepidosauria</taxon>
        <taxon>Squamata</taxon>
        <taxon>Bifurcata</taxon>
        <taxon>Unidentata</taxon>
        <taxon>Episquamata</taxon>
        <taxon>Toxicofera</taxon>
        <taxon>Serpentes</taxon>
        <taxon>Colubroidea</taxon>
        <taxon>Elapidae</taxon>
        <taxon>Hydrophiinae</taxon>
        <taxon>Austrelaps</taxon>
    </lineage>
</organism>
<evidence type="ECO:0000250" key="1"/>
<evidence type="ECO:0000255" key="2">
    <source>
        <dbReference type="PROSITE-ProRule" id="PRU10035"/>
    </source>
</evidence>
<evidence type="ECO:0000269" key="3">
    <source>
    </source>
</evidence>
<evidence type="ECO:0000305" key="4"/>
<accession>P59068</accession>
<protein>
    <recommendedName>
        <fullName>Phospholipase A2 superbin b</fullName>
        <shortName>svPLA2</shortName>
        <ecNumber>3.1.1.4</ecNumber>
    </recommendedName>
    <alternativeName>
        <fullName>Phosphatidylcholine 2-acylhydrolase</fullName>
    </alternativeName>
</protein>
<feature type="chain" id="PRO_0000161611" description="Phospholipase A2 superbin b">
    <location>
        <begin position="1"/>
        <end position="57" status="greater than"/>
    </location>
</feature>
<feature type="active site" evidence="2">
    <location>
        <position position="48"/>
    </location>
</feature>
<feature type="binding site" evidence="1">
    <location>
        <position position="28"/>
    </location>
    <ligand>
        <name>Ca(2+)</name>
        <dbReference type="ChEBI" id="CHEBI:29108"/>
    </ligand>
</feature>
<feature type="binding site" evidence="1">
    <location>
        <position position="30"/>
    </location>
    <ligand>
        <name>Ca(2+)</name>
        <dbReference type="ChEBI" id="CHEBI:29108"/>
    </ligand>
</feature>
<feature type="binding site" evidence="1">
    <location>
        <position position="32"/>
    </location>
    <ligand>
        <name>Ca(2+)</name>
        <dbReference type="ChEBI" id="CHEBI:29108"/>
    </ligand>
</feature>
<feature type="binding site" evidence="1">
    <location>
        <position position="49"/>
    </location>
    <ligand>
        <name>Ca(2+)</name>
        <dbReference type="ChEBI" id="CHEBI:29108"/>
    </ligand>
</feature>
<feature type="disulfide bond" evidence="1">
    <location>
        <begin position="29"/>
        <end position="45"/>
    </location>
</feature>
<feature type="non-terminal residue">
    <location>
        <position position="57"/>
    </location>
</feature>
<sequence>NLYQFKNMIQCANRGSRHWLAYADYGCYCGWGGSGTPVDELDRCCKTHDDCYTEAGK</sequence>
<proteinExistence type="evidence at protein level"/>